<protein>
    <recommendedName>
        <fullName evidence="1">ADP-L-glycero-D-manno-heptose-6-epimerase</fullName>
        <ecNumber evidence="1">5.1.3.20</ecNumber>
    </recommendedName>
    <alternativeName>
        <fullName evidence="1">ADP-L-glycero-beta-D-manno-heptose-6-epimerase</fullName>
        <shortName evidence="1">ADP-glyceromanno-heptose 6-epimerase</shortName>
        <shortName evidence="1">ADP-hep 6-epimerase</shortName>
        <shortName evidence="1">AGME</shortName>
    </alternativeName>
</protein>
<comment type="function">
    <text evidence="1">Catalyzes the interconversion between ADP-D-glycero-beta-D-manno-heptose and ADP-L-glycero-beta-D-manno-heptose via an epimerization at carbon 6 of the heptose.</text>
</comment>
<comment type="catalytic activity">
    <reaction evidence="1">
        <text>ADP-D-glycero-beta-D-manno-heptose = ADP-L-glycero-beta-D-manno-heptose</text>
        <dbReference type="Rhea" id="RHEA:17577"/>
        <dbReference type="ChEBI" id="CHEBI:59967"/>
        <dbReference type="ChEBI" id="CHEBI:61506"/>
        <dbReference type="EC" id="5.1.3.20"/>
    </reaction>
</comment>
<comment type="cofactor">
    <cofactor evidence="1">
        <name>NADP(+)</name>
        <dbReference type="ChEBI" id="CHEBI:58349"/>
    </cofactor>
    <text evidence="1">Binds 1 NADP(+) per subunit.</text>
</comment>
<comment type="pathway">
    <text evidence="1">Nucleotide-sugar biosynthesis; ADP-L-glycero-beta-D-manno-heptose biosynthesis; ADP-L-glycero-beta-D-manno-heptose from D-glycero-beta-D-manno-heptose 7-phosphate: step 4/4.</text>
</comment>
<comment type="subunit">
    <text evidence="1">Homopentamer.</text>
</comment>
<comment type="domain">
    <text evidence="1">Contains a large N-terminal NADP-binding domain, and a smaller C-terminal substrate-binding domain.</text>
</comment>
<comment type="similarity">
    <text evidence="1">Belongs to the NAD(P)-dependent epimerase/dehydratase family. HldD subfamily.</text>
</comment>
<accession>Q1LQG2</accession>
<gene>
    <name evidence="1" type="primary">hldD</name>
    <name type="ordered locus">Rmet_0728</name>
</gene>
<proteinExistence type="inferred from homology"/>
<sequence length="331" mass="37354">MTIIVTGAAGFIGSNIVKGLNERGETNIIAVDNLTRAEKFNNLVDCEIADYLDKTDFVARFARGDFGNVRAVFHEGACSDTMETDGRYMMENNYRYTLALLEACLEQGAQFLYASSAATYGASTMFREDRDYEKPLNVYGYSKFLFDQVVRRRLPSAHSQIVGFRYFNVYGPREFHKGRMASVAFHHFNQFRAEGTVKLFGEYNGYAPGTQSRDFVSVEDVVKVNLYFLDHPEKSGIFNLGTGRSQPFNDIAVSVVNALRESEGKPALSLDEMVQEGLVEYVKFPDALRGKYQCFTQSDVSRLRGAGYSDQFLTVQEGVSRYCKWLLERSA</sequence>
<feature type="chain" id="PRO_0000255738" description="ADP-L-glycero-D-manno-heptose-6-epimerase">
    <location>
        <begin position="1"/>
        <end position="331"/>
    </location>
</feature>
<feature type="active site" description="Proton acceptor" evidence="1">
    <location>
        <position position="139"/>
    </location>
</feature>
<feature type="active site" description="Proton acceptor" evidence="1">
    <location>
        <position position="177"/>
    </location>
</feature>
<feature type="binding site" evidence="1">
    <location>
        <begin position="11"/>
        <end position="12"/>
    </location>
    <ligand>
        <name>NADP(+)</name>
        <dbReference type="ChEBI" id="CHEBI:58349"/>
    </ligand>
</feature>
<feature type="binding site" evidence="1">
    <location>
        <begin position="32"/>
        <end position="33"/>
    </location>
    <ligand>
        <name>NADP(+)</name>
        <dbReference type="ChEBI" id="CHEBI:58349"/>
    </ligand>
</feature>
<feature type="binding site" evidence="1">
    <location>
        <position position="39"/>
    </location>
    <ligand>
        <name>NADP(+)</name>
        <dbReference type="ChEBI" id="CHEBI:58349"/>
    </ligand>
</feature>
<feature type="binding site" evidence="1">
    <location>
        <position position="54"/>
    </location>
    <ligand>
        <name>NADP(+)</name>
        <dbReference type="ChEBI" id="CHEBI:58349"/>
    </ligand>
</feature>
<feature type="binding site" evidence="1">
    <location>
        <begin position="75"/>
        <end position="79"/>
    </location>
    <ligand>
        <name>NADP(+)</name>
        <dbReference type="ChEBI" id="CHEBI:58349"/>
    </ligand>
</feature>
<feature type="binding site" evidence="1">
    <location>
        <position position="92"/>
    </location>
    <ligand>
        <name>NADP(+)</name>
        <dbReference type="ChEBI" id="CHEBI:58349"/>
    </ligand>
</feature>
<feature type="binding site" evidence="1">
    <location>
        <position position="143"/>
    </location>
    <ligand>
        <name>NADP(+)</name>
        <dbReference type="ChEBI" id="CHEBI:58349"/>
    </ligand>
</feature>
<feature type="binding site" evidence="1">
    <location>
        <position position="168"/>
    </location>
    <ligand>
        <name>substrate</name>
    </ligand>
</feature>
<feature type="binding site" evidence="1">
    <location>
        <position position="169"/>
    </location>
    <ligand>
        <name>NADP(+)</name>
        <dbReference type="ChEBI" id="CHEBI:58349"/>
    </ligand>
</feature>
<feature type="binding site" evidence="1">
    <location>
        <position position="177"/>
    </location>
    <ligand>
        <name>NADP(+)</name>
        <dbReference type="ChEBI" id="CHEBI:58349"/>
    </ligand>
</feature>
<feature type="binding site" evidence="1">
    <location>
        <position position="179"/>
    </location>
    <ligand>
        <name>substrate</name>
    </ligand>
</feature>
<feature type="binding site" evidence="1">
    <location>
        <position position="186"/>
    </location>
    <ligand>
        <name>substrate</name>
    </ligand>
</feature>
<feature type="binding site" evidence="1">
    <location>
        <begin position="200"/>
        <end position="203"/>
    </location>
    <ligand>
        <name>substrate</name>
    </ligand>
</feature>
<feature type="binding site" evidence="1">
    <location>
        <position position="213"/>
    </location>
    <ligand>
        <name>substrate</name>
    </ligand>
</feature>
<feature type="binding site" evidence="1">
    <location>
        <position position="292"/>
    </location>
    <ligand>
        <name>substrate</name>
    </ligand>
</feature>
<keyword id="KW-0119">Carbohydrate metabolism</keyword>
<keyword id="KW-0413">Isomerase</keyword>
<keyword id="KW-0521">NADP</keyword>
<keyword id="KW-1185">Reference proteome</keyword>
<organism>
    <name type="scientific">Cupriavidus metallidurans (strain ATCC 43123 / DSM 2839 / NBRC 102507 / CH34)</name>
    <name type="common">Ralstonia metallidurans</name>
    <dbReference type="NCBI Taxonomy" id="266264"/>
    <lineage>
        <taxon>Bacteria</taxon>
        <taxon>Pseudomonadati</taxon>
        <taxon>Pseudomonadota</taxon>
        <taxon>Betaproteobacteria</taxon>
        <taxon>Burkholderiales</taxon>
        <taxon>Burkholderiaceae</taxon>
        <taxon>Cupriavidus</taxon>
    </lineage>
</organism>
<dbReference type="EC" id="5.1.3.20" evidence="1"/>
<dbReference type="EMBL" id="CP000352">
    <property type="protein sequence ID" value="ABF07614.1"/>
    <property type="molecule type" value="Genomic_DNA"/>
</dbReference>
<dbReference type="RefSeq" id="WP_011515575.1">
    <property type="nucleotide sequence ID" value="NC_007973.1"/>
</dbReference>
<dbReference type="SMR" id="Q1LQG2"/>
<dbReference type="STRING" id="266264.Rmet_0728"/>
<dbReference type="KEGG" id="rme:Rmet_0728"/>
<dbReference type="eggNOG" id="COG0451">
    <property type="taxonomic scope" value="Bacteria"/>
</dbReference>
<dbReference type="HOGENOM" id="CLU_007383_1_3_4"/>
<dbReference type="UniPathway" id="UPA00356">
    <property type="reaction ID" value="UER00440"/>
</dbReference>
<dbReference type="Proteomes" id="UP000002429">
    <property type="component" value="Chromosome"/>
</dbReference>
<dbReference type="GO" id="GO:0008712">
    <property type="term" value="F:ADP-glyceromanno-heptose 6-epimerase activity"/>
    <property type="evidence" value="ECO:0007669"/>
    <property type="project" value="UniProtKB-UniRule"/>
</dbReference>
<dbReference type="GO" id="GO:0050661">
    <property type="term" value="F:NADP binding"/>
    <property type="evidence" value="ECO:0007669"/>
    <property type="project" value="InterPro"/>
</dbReference>
<dbReference type="GO" id="GO:0097171">
    <property type="term" value="P:ADP-L-glycero-beta-D-manno-heptose biosynthetic process"/>
    <property type="evidence" value="ECO:0007669"/>
    <property type="project" value="UniProtKB-UniPathway"/>
</dbReference>
<dbReference type="GO" id="GO:0005975">
    <property type="term" value="P:carbohydrate metabolic process"/>
    <property type="evidence" value="ECO:0007669"/>
    <property type="project" value="UniProtKB-UniRule"/>
</dbReference>
<dbReference type="CDD" id="cd05248">
    <property type="entry name" value="ADP_GME_SDR_e"/>
    <property type="match status" value="1"/>
</dbReference>
<dbReference type="Gene3D" id="3.40.50.720">
    <property type="entry name" value="NAD(P)-binding Rossmann-like Domain"/>
    <property type="match status" value="1"/>
</dbReference>
<dbReference type="Gene3D" id="3.90.25.10">
    <property type="entry name" value="UDP-galactose 4-epimerase, domain 1"/>
    <property type="match status" value="1"/>
</dbReference>
<dbReference type="HAMAP" id="MF_01601">
    <property type="entry name" value="Heptose_epimerase"/>
    <property type="match status" value="1"/>
</dbReference>
<dbReference type="InterPro" id="IPR001509">
    <property type="entry name" value="Epimerase_deHydtase"/>
</dbReference>
<dbReference type="InterPro" id="IPR011912">
    <property type="entry name" value="Heptose_epim"/>
</dbReference>
<dbReference type="InterPro" id="IPR036291">
    <property type="entry name" value="NAD(P)-bd_dom_sf"/>
</dbReference>
<dbReference type="NCBIfam" id="TIGR02197">
    <property type="entry name" value="heptose_epim"/>
    <property type="match status" value="1"/>
</dbReference>
<dbReference type="PANTHER" id="PTHR43103:SF3">
    <property type="entry name" value="ADP-L-GLYCERO-D-MANNO-HEPTOSE-6-EPIMERASE"/>
    <property type="match status" value="1"/>
</dbReference>
<dbReference type="PANTHER" id="PTHR43103">
    <property type="entry name" value="NUCLEOSIDE-DIPHOSPHATE-SUGAR EPIMERASE"/>
    <property type="match status" value="1"/>
</dbReference>
<dbReference type="Pfam" id="PF01370">
    <property type="entry name" value="Epimerase"/>
    <property type="match status" value="1"/>
</dbReference>
<dbReference type="SUPFAM" id="SSF51735">
    <property type="entry name" value="NAD(P)-binding Rossmann-fold domains"/>
    <property type="match status" value="1"/>
</dbReference>
<reference key="1">
    <citation type="journal article" date="2010" name="PLoS ONE">
        <title>The complete genome sequence of Cupriavidus metallidurans strain CH34, a master survivalist in harsh and anthropogenic environments.</title>
        <authorList>
            <person name="Janssen P.J."/>
            <person name="Van Houdt R."/>
            <person name="Moors H."/>
            <person name="Monsieurs P."/>
            <person name="Morin N."/>
            <person name="Michaux A."/>
            <person name="Benotmane M.A."/>
            <person name="Leys N."/>
            <person name="Vallaeys T."/>
            <person name="Lapidus A."/>
            <person name="Monchy S."/>
            <person name="Medigue C."/>
            <person name="Taghavi S."/>
            <person name="McCorkle S."/>
            <person name="Dunn J."/>
            <person name="van der Lelie D."/>
            <person name="Mergeay M."/>
        </authorList>
    </citation>
    <scope>NUCLEOTIDE SEQUENCE [LARGE SCALE GENOMIC DNA]</scope>
    <source>
        <strain>ATCC 43123 / DSM 2839 / NBRC 102507 / CH34</strain>
    </source>
</reference>
<name>HLDD_CUPMC</name>
<evidence type="ECO:0000255" key="1">
    <source>
        <dbReference type="HAMAP-Rule" id="MF_01601"/>
    </source>
</evidence>